<evidence type="ECO:0000250" key="1"/>
<evidence type="ECO:0000305" key="2"/>
<keyword id="KW-0687">Ribonucleoprotein</keyword>
<keyword id="KW-0689">Ribosomal protein</keyword>
<keyword id="KW-0694">RNA-binding</keyword>
<keyword id="KW-0699">rRNA-binding</keyword>
<organism>
    <name type="scientific">Daucus carota</name>
    <name type="common">Wild carrot</name>
    <dbReference type="NCBI Taxonomy" id="4039"/>
    <lineage>
        <taxon>Eukaryota</taxon>
        <taxon>Viridiplantae</taxon>
        <taxon>Streptophyta</taxon>
        <taxon>Embryophyta</taxon>
        <taxon>Tracheophyta</taxon>
        <taxon>Spermatophyta</taxon>
        <taxon>Magnoliopsida</taxon>
        <taxon>eudicotyledons</taxon>
        <taxon>Gunneridae</taxon>
        <taxon>Pentapetalae</taxon>
        <taxon>asterids</taxon>
        <taxon>campanulids</taxon>
        <taxon>Apiales</taxon>
        <taxon>Apiaceae</taxon>
        <taxon>Apioideae</taxon>
        <taxon>Scandiceae</taxon>
        <taxon>Daucinae</taxon>
        <taxon>Daucus</taxon>
        <taxon>Daucus sect. Daucus</taxon>
    </lineage>
</organism>
<proteinExistence type="evidence at transcript level"/>
<sequence length="154" mass="17522">MSPAKVDVTKKSDAKAQALKTAKAVKSGTTKFKKVKKIRTSVTFHRPRTLTKDRNPKYPRISATPRNKLDQYQILKYPLTTESAMKKIEDNNTLVFIVDIRANKKKIKDAVKKMYDIQTKKVNTLIRPDGTKKAYVRLTPDYDALDVANKIGII</sequence>
<protein>
    <recommendedName>
        <fullName evidence="2">Large ribosomal subunit protein uL23</fullName>
    </recommendedName>
    <alternativeName>
        <fullName>60S ribosomal protein L23a</fullName>
    </alternativeName>
</protein>
<accession>Q9AT35</accession>
<name>RL23A_DAUCA</name>
<feature type="chain" id="PRO_0000129475" description="Large ribosomal subunit protein uL23">
    <location>
        <begin position="1"/>
        <end position="154"/>
    </location>
</feature>
<comment type="function">
    <text evidence="1">This protein binds to a specific region on the 26S rRNA.</text>
</comment>
<comment type="similarity">
    <text evidence="2">Belongs to the universal ribosomal protein uL23 family.</text>
</comment>
<dbReference type="EMBL" id="AF349961">
    <property type="protein sequence ID" value="AAK30202.1"/>
    <property type="molecule type" value="mRNA"/>
</dbReference>
<dbReference type="SMR" id="Q9AT35"/>
<dbReference type="OMA" id="YYTIKFL"/>
<dbReference type="GO" id="GO:1990904">
    <property type="term" value="C:ribonucleoprotein complex"/>
    <property type="evidence" value="ECO:0007669"/>
    <property type="project" value="UniProtKB-KW"/>
</dbReference>
<dbReference type="GO" id="GO:0005840">
    <property type="term" value="C:ribosome"/>
    <property type="evidence" value="ECO:0007669"/>
    <property type="project" value="UniProtKB-KW"/>
</dbReference>
<dbReference type="GO" id="GO:0003729">
    <property type="term" value="F:mRNA binding"/>
    <property type="evidence" value="ECO:0007669"/>
    <property type="project" value="UniProtKB-ARBA"/>
</dbReference>
<dbReference type="GO" id="GO:0019843">
    <property type="term" value="F:rRNA binding"/>
    <property type="evidence" value="ECO:0007669"/>
    <property type="project" value="UniProtKB-KW"/>
</dbReference>
<dbReference type="GO" id="GO:0003735">
    <property type="term" value="F:structural constituent of ribosome"/>
    <property type="evidence" value="ECO:0007669"/>
    <property type="project" value="InterPro"/>
</dbReference>
<dbReference type="GO" id="GO:0006412">
    <property type="term" value="P:translation"/>
    <property type="evidence" value="ECO:0007669"/>
    <property type="project" value="InterPro"/>
</dbReference>
<dbReference type="FunFam" id="3.30.70.330:FF:000035">
    <property type="entry name" value="60S ribosomal protein L23a"/>
    <property type="match status" value="1"/>
</dbReference>
<dbReference type="Gene3D" id="3.30.70.330">
    <property type="match status" value="1"/>
</dbReference>
<dbReference type="HAMAP" id="MF_01369_A">
    <property type="entry name" value="Ribosomal_uL23_A"/>
    <property type="match status" value="1"/>
</dbReference>
<dbReference type="InterPro" id="IPR012677">
    <property type="entry name" value="Nucleotide-bd_a/b_plait_sf"/>
</dbReference>
<dbReference type="InterPro" id="IPR019985">
    <property type="entry name" value="Ribosomal_uL23"/>
</dbReference>
<dbReference type="InterPro" id="IPR013025">
    <property type="entry name" value="Ribosomal_uL23-like"/>
</dbReference>
<dbReference type="InterPro" id="IPR012678">
    <property type="entry name" value="Ribosomal_uL23/eL15/eS24_sf"/>
</dbReference>
<dbReference type="InterPro" id="IPR001014">
    <property type="entry name" value="Ribosomal_uL23_CS"/>
</dbReference>
<dbReference type="InterPro" id="IPR005633">
    <property type="entry name" value="Ribosomal_uL23_N"/>
</dbReference>
<dbReference type="NCBIfam" id="NF011118">
    <property type="entry name" value="PRK14548.1"/>
    <property type="match status" value="1"/>
</dbReference>
<dbReference type="NCBIfam" id="TIGR03636">
    <property type="entry name" value="uL23_arch"/>
    <property type="match status" value="1"/>
</dbReference>
<dbReference type="PANTHER" id="PTHR11620">
    <property type="entry name" value="60S RIBOSOMAL PROTEIN L23A"/>
    <property type="match status" value="1"/>
</dbReference>
<dbReference type="Pfam" id="PF00276">
    <property type="entry name" value="Ribosomal_L23"/>
    <property type="match status" value="1"/>
</dbReference>
<dbReference type="Pfam" id="PF03939">
    <property type="entry name" value="Ribosomal_L23eN"/>
    <property type="match status" value="1"/>
</dbReference>
<dbReference type="SUPFAM" id="SSF54189">
    <property type="entry name" value="Ribosomal proteins S24e, L23 and L15e"/>
    <property type="match status" value="1"/>
</dbReference>
<dbReference type="PROSITE" id="PS00050">
    <property type="entry name" value="RIBOSOMAL_L23"/>
    <property type="match status" value="1"/>
</dbReference>
<gene>
    <name type="primary">RPL23A</name>
</gene>
<reference key="1">
    <citation type="submission" date="2001-02" db="EMBL/GenBank/DDBJ databases">
        <authorList>
            <person name="Zhang L."/>
            <person name="Yang Z."/>
            <person name="Liu Y."/>
            <person name="Huang M."/>
            <person name="Wu N."/>
        </authorList>
    </citation>
    <scope>NUCLEOTIDE SEQUENCE [MRNA]</scope>
</reference>